<dbReference type="PIR" id="A03346">
    <property type="entry name" value="FWPMV4"/>
</dbReference>
<dbReference type="SMR" id="P02856"/>
<dbReference type="GO" id="GO:0033095">
    <property type="term" value="C:aleurone grain"/>
    <property type="evidence" value="ECO:0007669"/>
    <property type="project" value="UniProtKB-SubCell"/>
</dbReference>
<dbReference type="GO" id="GO:0005773">
    <property type="term" value="C:vacuole"/>
    <property type="evidence" value="ECO:0007669"/>
    <property type="project" value="UniProtKB-SubCell"/>
</dbReference>
<dbReference type="GO" id="GO:0045735">
    <property type="term" value="F:nutrient reservoir activity"/>
    <property type="evidence" value="ECO:0007669"/>
    <property type="project" value="UniProtKB-KW"/>
</dbReference>
<dbReference type="Gene3D" id="2.60.120.1450">
    <property type="match status" value="1"/>
</dbReference>
<dbReference type="InterPro" id="IPR006045">
    <property type="entry name" value="Cupin_1"/>
</dbReference>
<dbReference type="InterPro" id="IPR011051">
    <property type="entry name" value="RmlC_Cupin_sf"/>
</dbReference>
<dbReference type="InterPro" id="IPR050253">
    <property type="entry name" value="Seed_Storage-Functional"/>
</dbReference>
<dbReference type="PANTHER" id="PTHR31189">
    <property type="entry name" value="OS03G0336100 PROTEIN-RELATED"/>
    <property type="match status" value="1"/>
</dbReference>
<dbReference type="PANTHER" id="PTHR31189:SF41">
    <property type="entry name" value="VICILIN C72"/>
    <property type="match status" value="1"/>
</dbReference>
<dbReference type="Pfam" id="PF00190">
    <property type="entry name" value="Cupin_1"/>
    <property type="match status" value="1"/>
</dbReference>
<dbReference type="SUPFAM" id="SSF51182">
    <property type="entry name" value="RmlC-like cupins"/>
    <property type="match status" value="1"/>
</dbReference>
<protein>
    <recommendedName>
        <fullName>Vicilin, 14 kDa component</fullName>
    </recommendedName>
</protein>
<sequence length="124" mass="14040">DRRQELSNENVLVKVSRRQLEELSKNAKSSSRRSVSSESGPFNLRSEDPLYSNNSGKFFELTPEKNQQLQDLDLFVNSVDLKEGSLLLPNYNSRALLVLVLVVNEGKGDFELVGQRNENQGKEN</sequence>
<name>VCL1_PEA</name>
<keyword id="KW-0903">Direct protein sequencing</keyword>
<keyword id="KW-0325">Glycoprotein</keyword>
<keyword id="KW-0708">Seed storage protein</keyword>
<keyword id="KW-0758">Storage protein</keyword>
<keyword id="KW-0926">Vacuole</keyword>
<comment type="function">
    <text>Seed storage protein.</text>
</comment>
<comment type="subcellular location">
    <subcellularLocation>
        <location>Vacuole</location>
        <location>Aleurone grain</location>
    </subcellularLocation>
    <subcellularLocation>
        <location>Vacuole</location>
    </subcellularLocation>
    <text>Cotyledonary membrane-bound vacuolar protein bodies.</text>
</comment>
<comment type="miscellaneous">
    <text>The microsequencing technique did not distinguish Leu from Ile; however, residues at positions 6, 23, 44, 86, 87, 97, and 112 are most likely to be Leu as these are points of chymotryptic cleavage.</text>
</comment>
<comment type="similarity">
    <text evidence="3">Belongs to the 7S seed storage protein family.</text>
</comment>
<organism>
    <name type="scientific">Pisum sativum</name>
    <name type="common">Garden pea</name>
    <name type="synonym">Lathyrus oleraceus</name>
    <dbReference type="NCBI Taxonomy" id="3888"/>
    <lineage>
        <taxon>Eukaryota</taxon>
        <taxon>Viridiplantae</taxon>
        <taxon>Streptophyta</taxon>
        <taxon>Embryophyta</taxon>
        <taxon>Tracheophyta</taxon>
        <taxon>Spermatophyta</taxon>
        <taxon>Magnoliopsida</taxon>
        <taxon>eudicotyledons</taxon>
        <taxon>Gunneridae</taxon>
        <taxon>Pentapetalae</taxon>
        <taxon>rosids</taxon>
        <taxon>fabids</taxon>
        <taxon>Fabales</taxon>
        <taxon>Fabaceae</taxon>
        <taxon>Papilionoideae</taxon>
        <taxon>50 kb inversion clade</taxon>
        <taxon>NPAAA clade</taxon>
        <taxon>Hologalegina</taxon>
        <taxon>IRL clade</taxon>
        <taxon>Fabeae</taxon>
        <taxon>Pisum</taxon>
    </lineage>
</organism>
<accession>P02856</accession>
<feature type="chain" id="PRO_0000142293" description="Vicilin, 14 kDa component">
    <location>
        <begin position="1"/>
        <end position="124"/>
    </location>
</feature>
<feature type="region of interest" description="Disordered" evidence="2">
    <location>
        <begin position="23"/>
        <end position="57"/>
    </location>
</feature>
<feature type="glycosylation site" description="N-linked (GlcNAc...) asparagine" evidence="1">
    <location>
        <position position="53"/>
    </location>
</feature>
<feature type="sequence variant">
    <original>R</original>
    <variation>E</variation>
    <location>
        <position position="18"/>
    </location>
</feature>
<feature type="sequence variant">
    <original>S</original>
    <variation>N</variation>
    <location>
        <position position="39"/>
    </location>
</feature>
<feature type="sequence variant">
    <original>E</original>
    <variation>R</variation>
    <location>
        <position position="47"/>
    </location>
</feature>
<feature type="sequence variant">
    <original>E</original>
    <variation>S</variation>
    <location>
        <position position="47"/>
    </location>
</feature>
<feature type="sequence variant">
    <original>D</original>
    <variation>N</variation>
    <location>
        <position position="48"/>
    </location>
</feature>
<evidence type="ECO:0000255" key="1"/>
<evidence type="ECO:0000256" key="2">
    <source>
        <dbReference type="SAM" id="MobiDB-lite"/>
    </source>
</evidence>
<evidence type="ECO:0000305" key="3"/>
<proteinExistence type="evidence at protein level"/>
<reference key="1">
    <citation type="journal article" date="1982" name="FEBS Lett.">
        <title>The complete amino acid sequence of a subunit of the vicilin seed storage protein of pea (Pisum sativum L.).</title>
        <authorList>
            <person name="Hirano H."/>
            <person name="Gatehouse J.A."/>
            <person name="Boulter D."/>
        </authorList>
    </citation>
    <scope>PROTEIN SEQUENCE</scope>
    <source>
        <strain>cv. Feltham First</strain>
    </source>
</reference>